<keyword id="KW-0997">Cell inner membrane</keyword>
<keyword id="KW-1003">Cell membrane</keyword>
<keyword id="KW-0472">Membrane</keyword>
<keyword id="KW-0520">NAD</keyword>
<keyword id="KW-0560">Oxidoreductase</keyword>
<evidence type="ECO:0000255" key="1">
    <source>
        <dbReference type="HAMAP-Rule" id="MF_01415"/>
    </source>
</evidence>
<sequence length="182" mass="21226">MLQPPKVLLLYAHPESQDSVANRVLLQPVQQLEHVTVHDLYAHYPDFFIDIHHEQQLLRDHQVIVFQHPLYTYSCPALLKEWLDRVLARGFANGVGGHALTGKYWRSVITTGEQEGTYRIGGYNRYPMEDILRPFELTAAMCHMHWINPMIIYWARRQKPETLASHAQAYVQWLQSPLTRGL</sequence>
<protein>
    <recommendedName>
        <fullName evidence="1">Glutathione-regulated potassium-efflux system ancillary protein KefG</fullName>
    </recommendedName>
    <alternativeName>
        <fullName evidence="1">Putative quinone oxidoreductase KefG</fullName>
        <ecNumber evidence="1">1.6.5.2</ecNumber>
    </alternativeName>
</protein>
<gene>
    <name evidence="1" type="primary">kefG</name>
    <name type="ordered locus">YpsIP31758_3931</name>
</gene>
<reference key="1">
    <citation type="journal article" date="2007" name="PLoS Genet.">
        <title>The complete genome sequence of Yersinia pseudotuberculosis IP31758, the causative agent of Far East scarlet-like fever.</title>
        <authorList>
            <person name="Eppinger M."/>
            <person name="Rosovitz M.J."/>
            <person name="Fricke W.F."/>
            <person name="Rasko D.A."/>
            <person name="Kokorina G."/>
            <person name="Fayolle C."/>
            <person name="Lindler L.E."/>
            <person name="Carniel E."/>
            <person name="Ravel J."/>
        </authorList>
    </citation>
    <scope>NUCLEOTIDE SEQUENCE [LARGE SCALE GENOMIC DNA]</scope>
    <source>
        <strain>IP 31758</strain>
    </source>
</reference>
<comment type="function">
    <text evidence="1">Regulatory subunit of a potassium efflux system that confers protection against electrophiles. Required for full activity of KefB.</text>
</comment>
<comment type="catalytic activity">
    <reaction evidence="1">
        <text>a quinone + NADH + H(+) = a quinol + NAD(+)</text>
        <dbReference type="Rhea" id="RHEA:46160"/>
        <dbReference type="ChEBI" id="CHEBI:15378"/>
        <dbReference type="ChEBI" id="CHEBI:24646"/>
        <dbReference type="ChEBI" id="CHEBI:57540"/>
        <dbReference type="ChEBI" id="CHEBI:57945"/>
        <dbReference type="ChEBI" id="CHEBI:132124"/>
        <dbReference type="EC" id="1.6.5.2"/>
    </reaction>
</comment>
<comment type="catalytic activity">
    <reaction evidence="1">
        <text>a quinone + NADPH + H(+) = a quinol + NADP(+)</text>
        <dbReference type="Rhea" id="RHEA:46164"/>
        <dbReference type="ChEBI" id="CHEBI:15378"/>
        <dbReference type="ChEBI" id="CHEBI:24646"/>
        <dbReference type="ChEBI" id="CHEBI:57783"/>
        <dbReference type="ChEBI" id="CHEBI:58349"/>
        <dbReference type="ChEBI" id="CHEBI:132124"/>
        <dbReference type="EC" id="1.6.5.2"/>
    </reaction>
</comment>
<comment type="subunit">
    <text evidence="1">Interacts with KefB.</text>
</comment>
<comment type="subcellular location">
    <subcellularLocation>
        <location evidence="1">Cell inner membrane</location>
        <topology evidence="1">Peripheral membrane protein</topology>
        <orientation evidence="1">Cytoplasmic side</orientation>
    </subcellularLocation>
</comment>
<comment type="similarity">
    <text evidence="1">Belongs to the NAD(P)H dehydrogenase (quinone) family. KefG subfamily.</text>
</comment>
<proteinExistence type="inferred from homology"/>
<accession>A7FNQ1</accession>
<dbReference type="EC" id="1.6.5.2" evidence="1"/>
<dbReference type="EMBL" id="CP000720">
    <property type="protein sequence ID" value="ABS49752.1"/>
    <property type="molecule type" value="Genomic_DNA"/>
</dbReference>
<dbReference type="RefSeq" id="WP_012105870.1">
    <property type="nucleotide sequence ID" value="NC_009708.1"/>
</dbReference>
<dbReference type="SMR" id="A7FNQ1"/>
<dbReference type="KEGG" id="ypi:YpsIP31758_3931"/>
<dbReference type="HOGENOM" id="CLU_058643_0_1_6"/>
<dbReference type="Proteomes" id="UP000002412">
    <property type="component" value="Chromosome"/>
</dbReference>
<dbReference type="GO" id="GO:0005886">
    <property type="term" value="C:plasma membrane"/>
    <property type="evidence" value="ECO:0007669"/>
    <property type="project" value="UniProtKB-SubCell"/>
</dbReference>
<dbReference type="GO" id="GO:0009055">
    <property type="term" value="F:electron transfer activity"/>
    <property type="evidence" value="ECO:0007669"/>
    <property type="project" value="TreeGrafter"/>
</dbReference>
<dbReference type="GO" id="GO:0010181">
    <property type="term" value="F:FMN binding"/>
    <property type="evidence" value="ECO:0007669"/>
    <property type="project" value="TreeGrafter"/>
</dbReference>
<dbReference type="GO" id="GO:0050136">
    <property type="term" value="F:NADH:ubiquinone reductase (non-electrogenic) activity"/>
    <property type="evidence" value="ECO:0007669"/>
    <property type="project" value="RHEA"/>
</dbReference>
<dbReference type="GO" id="GO:0008753">
    <property type="term" value="F:NADPH dehydrogenase (quinone) activity"/>
    <property type="evidence" value="ECO:0007669"/>
    <property type="project" value="RHEA"/>
</dbReference>
<dbReference type="GO" id="GO:1901381">
    <property type="term" value="P:positive regulation of potassium ion transmembrane transport"/>
    <property type="evidence" value="ECO:0007669"/>
    <property type="project" value="UniProtKB-UniRule"/>
</dbReference>
<dbReference type="GO" id="GO:0006813">
    <property type="term" value="P:potassium ion transport"/>
    <property type="evidence" value="ECO:0007669"/>
    <property type="project" value="InterPro"/>
</dbReference>
<dbReference type="FunFam" id="3.40.50.360:FF:000013">
    <property type="entry name" value="Glutathione-regulated potassium-efflux system ancillary protein KefG"/>
    <property type="match status" value="1"/>
</dbReference>
<dbReference type="Gene3D" id="3.40.50.360">
    <property type="match status" value="1"/>
</dbReference>
<dbReference type="HAMAP" id="MF_01415">
    <property type="entry name" value="K_H_efflux_KefG"/>
    <property type="match status" value="1"/>
</dbReference>
<dbReference type="InterPro" id="IPR003680">
    <property type="entry name" value="Flavodoxin_fold"/>
</dbReference>
<dbReference type="InterPro" id="IPR029039">
    <property type="entry name" value="Flavoprotein-like_sf"/>
</dbReference>
<dbReference type="InterPro" id="IPR023947">
    <property type="entry name" value="K_H_efflux_KefG"/>
</dbReference>
<dbReference type="InterPro" id="IPR046980">
    <property type="entry name" value="KefG/KefF"/>
</dbReference>
<dbReference type="NCBIfam" id="NF003430">
    <property type="entry name" value="PRK04930.1"/>
    <property type="match status" value="1"/>
</dbReference>
<dbReference type="PANTHER" id="PTHR47307">
    <property type="entry name" value="GLUTATHIONE-REGULATED POTASSIUM-EFFLUX SYSTEM ANCILLARY PROTEIN KEFG"/>
    <property type="match status" value="1"/>
</dbReference>
<dbReference type="PANTHER" id="PTHR47307:SF1">
    <property type="entry name" value="GLUTATHIONE-REGULATED POTASSIUM-EFFLUX SYSTEM ANCILLARY PROTEIN KEFG"/>
    <property type="match status" value="1"/>
</dbReference>
<dbReference type="Pfam" id="PF02525">
    <property type="entry name" value="Flavodoxin_2"/>
    <property type="match status" value="1"/>
</dbReference>
<dbReference type="SUPFAM" id="SSF52218">
    <property type="entry name" value="Flavoproteins"/>
    <property type="match status" value="1"/>
</dbReference>
<feature type="chain" id="PRO_1000068486" description="Glutathione-regulated potassium-efflux system ancillary protein KefG">
    <location>
        <begin position="1"/>
        <end position="182"/>
    </location>
</feature>
<organism>
    <name type="scientific">Yersinia pseudotuberculosis serotype O:1b (strain IP 31758)</name>
    <dbReference type="NCBI Taxonomy" id="349747"/>
    <lineage>
        <taxon>Bacteria</taxon>
        <taxon>Pseudomonadati</taxon>
        <taxon>Pseudomonadota</taxon>
        <taxon>Gammaproteobacteria</taxon>
        <taxon>Enterobacterales</taxon>
        <taxon>Yersiniaceae</taxon>
        <taxon>Yersinia</taxon>
    </lineage>
</organism>
<name>KEFG_YERP3</name>